<sequence length="178" mass="20317">MASSMMVSTAAVSRTSPAQSNMVVPFAGLHSSAAFPVTRKFADSSKLPSNGLRVRCMQVWPPEGKKKFETLSYLPPLTREQLGQEVDYLIRNGWIPCIEFCKVGFVYREYHNSPGYYDGRYWTMWKLPMFGCTDSSQVLKEVDECSKAYPDYFNRIIGFDNTRQVQCISFLTYKPEGN</sequence>
<proteinExistence type="evidence at transcript level"/>
<accession>O48550</accession>
<keyword id="KW-0113">Calvin cycle</keyword>
<keyword id="KW-0120">Carbon dioxide fixation</keyword>
<keyword id="KW-0150">Chloroplast</keyword>
<keyword id="KW-0601">Photorespiration</keyword>
<keyword id="KW-0602">Photosynthesis</keyword>
<keyword id="KW-0934">Plastid</keyword>
<keyword id="KW-0809">Transit peptide</keyword>
<reference key="1">
    <citation type="online journal article" date="1998" name="Plant Gene Register">
        <title>Nucleotide sequence of a cDNA encoding the small subunit of ribulose-1,5-bisphosphate carboxylase/oxygenase from Zantedeschia aethiopica (L.) Spreng.</title>
        <authorList>
            <person name="Lino-Neto T."/>
            <person name="Tavares R.M."/>
            <person name="Palme K."/>
            <person name="Pais M.S.S."/>
        </authorList>
        <locator>PGR98-077</locator>
    </citation>
    <scope>NUCLEOTIDE SEQUENCE [MRNA]</scope>
    <source>
        <tissue>Leaf</tissue>
    </source>
</reference>
<dbReference type="EMBL" id="AF034479">
    <property type="protein sequence ID" value="AAC18406.1"/>
    <property type="molecule type" value="mRNA"/>
</dbReference>
<dbReference type="SMR" id="O48550"/>
<dbReference type="GO" id="GO:0009507">
    <property type="term" value="C:chloroplast"/>
    <property type="evidence" value="ECO:0007669"/>
    <property type="project" value="UniProtKB-SubCell"/>
</dbReference>
<dbReference type="GO" id="GO:0016984">
    <property type="term" value="F:ribulose-bisphosphate carboxylase activity"/>
    <property type="evidence" value="ECO:0007669"/>
    <property type="project" value="UniProtKB-UniRule"/>
</dbReference>
<dbReference type="GO" id="GO:0009853">
    <property type="term" value="P:photorespiration"/>
    <property type="evidence" value="ECO:0007669"/>
    <property type="project" value="UniProtKB-KW"/>
</dbReference>
<dbReference type="GO" id="GO:0019253">
    <property type="term" value="P:reductive pentose-phosphate cycle"/>
    <property type="evidence" value="ECO:0007669"/>
    <property type="project" value="UniProtKB-UniRule"/>
</dbReference>
<dbReference type="CDD" id="cd03527">
    <property type="entry name" value="RuBisCO_small"/>
    <property type="match status" value="1"/>
</dbReference>
<dbReference type="FunFam" id="3.30.190.10:FF:000001">
    <property type="entry name" value="Ribulose bisphosphate carboxylase small chain, chloroplastic"/>
    <property type="match status" value="1"/>
</dbReference>
<dbReference type="Gene3D" id="3.30.190.10">
    <property type="entry name" value="Ribulose bisphosphate carboxylase, small subunit"/>
    <property type="match status" value="1"/>
</dbReference>
<dbReference type="HAMAP" id="MF_00859">
    <property type="entry name" value="RuBisCO_S_bact"/>
    <property type="match status" value="1"/>
</dbReference>
<dbReference type="InterPro" id="IPR024681">
    <property type="entry name" value="RuBisCO_ssu"/>
</dbReference>
<dbReference type="InterPro" id="IPR000894">
    <property type="entry name" value="RuBisCO_ssu_dom"/>
</dbReference>
<dbReference type="InterPro" id="IPR024680">
    <property type="entry name" value="RuBisCO_ssu_N"/>
</dbReference>
<dbReference type="InterPro" id="IPR036385">
    <property type="entry name" value="RuBisCO_ssu_sf"/>
</dbReference>
<dbReference type="PANTHER" id="PTHR31262">
    <property type="entry name" value="RIBULOSE BISPHOSPHATE CARBOXYLASE SMALL CHAIN 1, CHLOROPLASTIC"/>
    <property type="match status" value="1"/>
</dbReference>
<dbReference type="PANTHER" id="PTHR31262:SF10">
    <property type="entry name" value="RIBULOSE BISPHOSPHATE CARBOXYLASE SMALL SUBUNIT 1A, CHLOROPLASTIC-RELATED"/>
    <property type="match status" value="1"/>
</dbReference>
<dbReference type="Pfam" id="PF12338">
    <property type="entry name" value="RbcS"/>
    <property type="match status" value="1"/>
</dbReference>
<dbReference type="Pfam" id="PF00101">
    <property type="entry name" value="RuBisCO_small"/>
    <property type="match status" value="1"/>
</dbReference>
<dbReference type="PRINTS" id="PR00152">
    <property type="entry name" value="RUBISCOSMALL"/>
</dbReference>
<dbReference type="SMART" id="SM00961">
    <property type="entry name" value="RuBisCO_small"/>
    <property type="match status" value="1"/>
</dbReference>
<dbReference type="SUPFAM" id="SSF55239">
    <property type="entry name" value="RuBisCO, small subunit"/>
    <property type="match status" value="1"/>
</dbReference>
<gene>
    <name evidence="1" type="primary">RBCS</name>
</gene>
<comment type="function">
    <text evidence="1">RuBisCO catalyzes two reactions: the carboxylation of D-ribulose 1,5-bisphosphate, the primary event in carbon dioxide fixation, as well as the oxidative fragmentation of the pentose substrate. Both reactions occur simultaneously and in competition at the same active site. Although the small subunit is not catalytic it is essential for maximal activity.</text>
</comment>
<comment type="subunit">
    <text evidence="1">Heterohexadecamer of 8 large and 8 small subunits.</text>
</comment>
<comment type="subcellular location">
    <subcellularLocation>
        <location evidence="1">Plastid</location>
        <location evidence="1">Chloroplast</location>
    </subcellularLocation>
</comment>
<comment type="miscellaneous">
    <text evidence="1">The basic functional RuBisCO is composed of a large chain homodimer in a 'head-to-tail' conformation. In form I RuBisCO this homodimer is arranged in a barrel-like tetramer with the small subunits forming a tetrameric 'cap' on each end of the 'barrel'.</text>
</comment>
<comment type="similarity">
    <text evidence="1">Belongs to the RuBisCO small chain family.</text>
</comment>
<name>RBS_ZANAE</name>
<protein>
    <recommendedName>
        <fullName evidence="1">Ribulose bisphosphate carboxylase small subunit, chloroplastic</fullName>
        <shortName evidence="1">RuBisCO small subunit</shortName>
    </recommendedName>
</protein>
<organism>
    <name type="scientific">Zantedeschia aethiopica</name>
    <name type="common">White calla lily</name>
    <name type="synonym">Calla aethiopica</name>
    <dbReference type="NCBI Taxonomy" id="69721"/>
    <lineage>
        <taxon>Eukaryota</taxon>
        <taxon>Viridiplantae</taxon>
        <taxon>Streptophyta</taxon>
        <taxon>Embryophyta</taxon>
        <taxon>Tracheophyta</taxon>
        <taxon>Spermatophyta</taxon>
        <taxon>Magnoliopsida</taxon>
        <taxon>Liliopsida</taxon>
        <taxon>Araceae</taxon>
        <taxon>Philodendroideae</taxon>
        <taxon>Zantedeschieae</taxon>
        <taxon>Zantedeschia</taxon>
    </lineage>
</organism>
<feature type="transit peptide" description="Chloroplast" evidence="1">
    <location>
        <begin position="1"/>
        <end position="55"/>
    </location>
</feature>
<feature type="chain" id="PRO_0000031564" description="Ribulose bisphosphate carboxylase small subunit, chloroplastic" evidence="1">
    <location>
        <begin position="56"/>
        <end position="178"/>
    </location>
</feature>
<evidence type="ECO:0000255" key="1">
    <source>
        <dbReference type="HAMAP-Rule" id="MF_00860"/>
    </source>
</evidence>